<comment type="function">
    <text evidence="1">Catalyzes the oxidative ring opening of 3-hydroxyanthranilate to 2-amino-3-carboxymuconate semialdehyde, which spontaneously cyclizes to quinolinate.</text>
</comment>
<comment type="catalytic activity">
    <reaction evidence="1">
        <text>3-hydroxyanthranilate + O2 = (2Z,4Z)-2-amino-3-carboxymuconate 6-semialdehyde</text>
        <dbReference type="Rhea" id="RHEA:17953"/>
        <dbReference type="ChEBI" id="CHEBI:15379"/>
        <dbReference type="ChEBI" id="CHEBI:36559"/>
        <dbReference type="ChEBI" id="CHEBI:77612"/>
        <dbReference type="EC" id="1.13.11.6"/>
    </reaction>
</comment>
<comment type="cofactor">
    <cofactor evidence="1">
        <name>Fe(2+)</name>
        <dbReference type="ChEBI" id="CHEBI:29033"/>
    </cofactor>
</comment>
<comment type="pathway">
    <text evidence="1">Cofactor biosynthesis; NAD(+) biosynthesis; quinolinate from L-kynurenine: step 3/3.</text>
</comment>
<comment type="subcellular location">
    <subcellularLocation>
        <location evidence="1">Cytoplasm</location>
    </subcellularLocation>
</comment>
<comment type="similarity">
    <text evidence="1">Belongs to the 3-HAO family.</text>
</comment>
<organism>
    <name type="scientific">Lodderomyces elongisporus (strain ATCC 11503 / CBS 2605 / JCM 1781 / NBRC 1676 / NRRL YB-4239)</name>
    <name type="common">Yeast</name>
    <name type="synonym">Saccharomyces elongisporus</name>
    <dbReference type="NCBI Taxonomy" id="379508"/>
    <lineage>
        <taxon>Eukaryota</taxon>
        <taxon>Fungi</taxon>
        <taxon>Dikarya</taxon>
        <taxon>Ascomycota</taxon>
        <taxon>Saccharomycotina</taxon>
        <taxon>Pichiomycetes</taxon>
        <taxon>Debaryomycetaceae</taxon>
        <taxon>Candida/Lodderomyces clade</taxon>
        <taxon>Lodderomyces</taxon>
    </lineage>
</organism>
<name>3HAO_LODEL</name>
<reference key="1">
    <citation type="journal article" date="2009" name="Nature">
        <title>Evolution of pathogenicity and sexual reproduction in eight Candida genomes.</title>
        <authorList>
            <person name="Butler G."/>
            <person name="Rasmussen M.D."/>
            <person name="Lin M.F."/>
            <person name="Santos M.A.S."/>
            <person name="Sakthikumar S."/>
            <person name="Munro C.A."/>
            <person name="Rheinbay E."/>
            <person name="Grabherr M."/>
            <person name="Forche A."/>
            <person name="Reedy J.L."/>
            <person name="Agrafioti I."/>
            <person name="Arnaud M.B."/>
            <person name="Bates S."/>
            <person name="Brown A.J.P."/>
            <person name="Brunke S."/>
            <person name="Costanzo M.C."/>
            <person name="Fitzpatrick D.A."/>
            <person name="de Groot P.W.J."/>
            <person name="Harris D."/>
            <person name="Hoyer L.L."/>
            <person name="Hube B."/>
            <person name="Klis F.M."/>
            <person name="Kodira C."/>
            <person name="Lennard N."/>
            <person name="Logue M.E."/>
            <person name="Martin R."/>
            <person name="Neiman A.M."/>
            <person name="Nikolaou E."/>
            <person name="Quail M.A."/>
            <person name="Quinn J."/>
            <person name="Santos M.C."/>
            <person name="Schmitzberger F.F."/>
            <person name="Sherlock G."/>
            <person name="Shah P."/>
            <person name="Silverstein K.A.T."/>
            <person name="Skrzypek M.S."/>
            <person name="Soll D."/>
            <person name="Staggs R."/>
            <person name="Stansfield I."/>
            <person name="Stumpf M.P.H."/>
            <person name="Sudbery P.E."/>
            <person name="Srikantha T."/>
            <person name="Zeng Q."/>
            <person name="Berman J."/>
            <person name="Berriman M."/>
            <person name="Heitman J."/>
            <person name="Gow N.A.R."/>
            <person name="Lorenz M.C."/>
            <person name="Birren B.W."/>
            <person name="Kellis M."/>
            <person name="Cuomo C.A."/>
        </authorList>
    </citation>
    <scope>NUCLEOTIDE SEQUENCE [LARGE SCALE GENOMIC DNA]</scope>
    <source>
        <strain>ATCC 11503 / BCRC 21390 / CBS 2605 / JCM 1781 / NBRC 1676 / NRRL YB-4239</strain>
    </source>
</reference>
<keyword id="KW-0963">Cytoplasm</keyword>
<keyword id="KW-0223">Dioxygenase</keyword>
<keyword id="KW-0408">Iron</keyword>
<keyword id="KW-0479">Metal-binding</keyword>
<keyword id="KW-0560">Oxidoreductase</keyword>
<keyword id="KW-0662">Pyridine nucleotide biosynthesis</keyword>
<keyword id="KW-1185">Reference proteome</keyword>
<protein>
    <recommendedName>
        <fullName evidence="1">3-hydroxyanthranilate 3,4-dioxygenase</fullName>
        <ecNumber evidence="1">1.13.11.6</ecNumber>
    </recommendedName>
    <alternativeName>
        <fullName evidence="1">3-hydroxyanthranilate oxygenase</fullName>
        <shortName evidence="1">3-HAO</shortName>
    </alternativeName>
    <alternativeName>
        <fullName evidence="1">3-hydroxyanthranilic acid dioxygenase</fullName>
        <shortName evidence="1">HAD</shortName>
    </alternativeName>
    <alternativeName>
        <fullName evidence="1">Biosynthesis of nicotinic acid protein 1</fullName>
    </alternativeName>
</protein>
<sequence>MPLPEPLNIKAWVEENEHLLKPPVNNFCLHRGGFTVMIVGGPNERSDYHINQTPEYFYQYKGTMCLKVVDEGKFRDIYIREGDTFLLPPNVPHNPCRFENTVGIVVEQDRPKGVNDRIRWYCARCESIVCEEEFYLTDLGTQIKDAIVAFDSNIEAKTCKNCGHVNSSKREPAEF</sequence>
<accession>A5E0Z9</accession>
<proteinExistence type="inferred from homology"/>
<evidence type="ECO:0000255" key="1">
    <source>
        <dbReference type="HAMAP-Rule" id="MF_03019"/>
    </source>
</evidence>
<dbReference type="EC" id="1.13.11.6" evidence="1"/>
<dbReference type="EMBL" id="CH981527">
    <property type="protein sequence ID" value="EDK45107.1"/>
    <property type="molecule type" value="Genomic_DNA"/>
</dbReference>
<dbReference type="RefSeq" id="XP_001525358.1">
    <property type="nucleotide sequence ID" value="XM_001525308.1"/>
</dbReference>
<dbReference type="SMR" id="A5E0Z9"/>
<dbReference type="FunCoup" id="A5E0Z9">
    <property type="interactions" value="146"/>
</dbReference>
<dbReference type="STRING" id="379508.A5E0Z9"/>
<dbReference type="GeneID" id="5232567"/>
<dbReference type="KEGG" id="lel:PVL30_002785"/>
<dbReference type="VEuPathDB" id="FungiDB:LELG_03286"/>
<dbReference type="eggNOG" id="KOG3995">
    <property type="taxonomic scope" value="Eukaryota"/>
</dbReference>
<dbReference type="HOGENOM" id="CLU_095765_0_0_1"/>
<dbReference type="InParanoid" id="A5E0Z9"/>
<dbReference type="OMA" id="KPPVGNQ"/>
<dbReference type="OrthoDB" id="204928at2759"/>
<dbReference type="UniPathway" id="UPA00253">
    <property type="reaction ID" value="UER00330"/>
</dbReference>
<dbReference type="Proteomes" id="UP000001996">
    <property type="component" value="Unassembled WGS sequence"/>
</dbReference>
<dbReference type="GO" id="GO:0005737">
    <property type="term" value="C:cytoplasm"/>
    <property type="evidence" value="ECO:0007669"/>
    <property type="project" value="UniProtKB-SubCell"/>
</dbReference>
<dbReference type="GO" id="GO:0000334">
    <property type="term" value="F:3-hydroxyanthranilate 3,4-dioxygenase activity"/>
    <property type="evidence" value="ECO:0007669"/>
    <property type="project" value="UniProtKB-UniRule"/>
</dbReference>
<dbReference type="GO" id="GO:0008198">
    <property type="term" value="F:ferrous iron binding"/>
    <property type="evidence" value="ECO:0007669"/>
    <property type="project" value="UniProtKB-UniRule"/>
</dbReference>
<dbReference type="GO" id="GO:0034354">
    <property type="term" value="P:'de novo' NAD biosynthetic process from L-tryptophan"/>
    <property type="evidence" value="ECO:0007669"/>
    <property type="project" value="UniProtKB-UniRule"/>
</dbReference>
<dbReference type="GO" id="GO:0043420">
    <property type="term" value="P:anthranilate metabolic process"/>
    <property type="evidence" value="ECO:0007669"/>
    <property type="project" value="UniProtKB-UniRule"/>
</dbReference>
<dbReference type="GO" id="GO:0006569">
    <property type="term" value="P:L-tryptophan catabolic process"/>
    <property type="evidence" value="ECO:0007669"/>
    <property type="project" value="UniProtKB-UniRule"/>
</dbReference>
<dbReference type="GO" id="GO:0019805">
    <property type="term" value="P:quinolinate biosynthetic process"/>
    <property type="evidence" value="ECO:0007669"/>
    <property type="project" value="UniProtKB-UniRule"/>
</dbReference>
<dbReference type="CDD" id="cd06123">
    <property type="entry name" value="cupin_HAO"/>
    <property type="match status" value="1"/>
</dbReference>
<dbReference type="FunFam" id="2.60.120.10:FF:000093">
    <property type="entry name" value="3-hydroxyanthranilate 3,4-dioxygenase"/>
    <property type="match status" value="1"/>
</dbReference>
<dbReference type="Gene3D" id="2.60.120.10">
    <property type="entry name" value="Jelly Rolls"/>
    <property type="match status" value="1"/>
</dbReference>
<dbReference type="HAMAP" id="MF_00825">
    <property type="entry name" value="3_HAO"/>
    <property type="match status" value="1"/>
</dbReference>
<dbReference type="InterPro" id="IPR010329">
    <property type="entry name" value="3hydroanth_dOase"/>
</dbReference>
<dbReference type="InterPro" id="IPR014710">
    <property type="entry name" value="RmlC-like_jellyroll"/>
</dbReference>
<dbReference type="InterPro" id="IPR011051">
    <property type="entry name" value="RmlC_Cupin_sf"/>
</dbReference>
<dbReference type="NCBIfam" id="TIGR03037">
    <property type="entry name" value="anthran_nbaC"/>
    <property type="match status" value="1"/>
</dbReference>
<dbReference type="PANTHER" id="PTHR15497">
    <property type="entry name" value="3-HYDROXYANTHRANILATE 3,4-DIOXYGENASE"/>
    <property type="match status" value="1"/>
</dbReference>
<dbReference type="PANTHER" id="PTHR15497:SF1">
    <property type="entry name" value="3-HYDROXYANTHRANILATE 3,4-DIOXYGENASE"/>
    <property type="match status" value="1"/>
</dbReference>
<dbReference type="Pfam" id="PF06052">
    <property type="entry name" value="3-HAO"/>
    <property type="match status" value="1"/>
</dbReference>
<dbReference type="SUPFAM" id="SSF51182">
    <property type="entry name" value="RmlC-like cupins"/>
    <property type="match status" value="1"/>
</dbReference>
<gene>
    <name evidence="1" type="primary">BNA1</name>
    <name type="ORF">LELG_03286</name>
</gene>
<feature type="chain" id="PRO_0000361988" description="3-hydroxyanthranilate 3,4-dioxygenase">
    <location>
        <begin position="1"/>
        <end position="175"/>
    </location>
</feature>
<feature type="binding site" evidence="1">
    <location>
        <position position="45"/>
    </location>
    <ligand>
        <name>O2</name>
        <dbReference type="ChEBI" id="CHEBI:15379"/>
    </ligand>
</feature>
<feature type="binding site" evidence="1">
    <location>
        <position position="49"/>
    </location>
    <ligand>
        <name>Fe cation</name>
        <dbReference type="ChEBI" id="CHEBI:24875"/>
        <note>catalytic</note>
    </ligand>
</feature>
<feature type="binding site" evidence="1">
    <location>
        <position position="55"/>
    </location>
    <ligand>
        <name>Fe cation</name>
        <dbReference type="ChEBI" id="CHEBI:24875"/>
        <note>catalytic</note>
    </ligand>
</feature>
<feature type="binding site" evidence="1">
    <location>
        <position position="55"/>
    </location>
    <ligand>
        <name>substrate</name>
    </ligand>
</feature>
<feature type="binding site" evidence="1">
    <location>
        <position position="93"/>
    </location>
    <ligand>
        <name>Fe cation</name>
        <dbReference type="ChEBI" id="CHEBI:24875"/>
        <note>catalytic</note>
    </ligand>
</feature>
<feature type="binding site" evidence="1">
    <location>
        <position position="97"/>
    </location>
    <ligand>
        <name>substrate</name>
    </ligand>
</feature>
<feature type="binding site" evidence="1">
    <location>
        <position position="107"/>
    </location>
    <ligand>
        <name>substrate</name>
    </ligand>
</feature>
<feature type="binding site" evidence="1">
    <location>
        <position position="122"/>
    </location>
    <ligand>
        <name>a divalent metal cation</name>
        <dbReference type="ChEBI" id="CHEBI:60240"/>
    </ligand>
</feature>
<feature type="binding site" evidence="1">
    <location>
        <position position="125"/>
    </location>
    <ligand>
        <name>a divalent metal cation</name>
        <dbReference type="ChEBI" id="CHEBI:60240"/>
    </ligand>
</feature>
<feature type="binding site" evidence="1">
    <location>
        <position position="159"/>
    </location>
    <ligand>
        <name>a divalent metal cation</name>
        <dbReference type="ChEBI" id="CHEBI:60240"/>
    </ligand>
</feature>
<feature type="binding site" evidence="1">
    <location>
        <position position="162"/>
    </location>
    <ligand>
        <name>a divalent metal cation</name>
        <dbReference type="ChEBI" id="CHEBI:60240"/>
    </ligand>
</feature>